<protein>
    <recommendedName>
        <fullName evidence="1">ATP synthase subunit beta, chloroplastic</fullName>
        <ecNumber evidence="1">7.1.2.2</ecNumber>
    </recommendedName>
    <alternativeName>
        <fullName evidence="1">ATP synthase F1 sector subunit beta</fullName>
    </alternativeName>
    <alternativeName>
        <fullName evidence="1">F-ATPase subunit beta</fullName>
    </alternativeName>
</protein>
<geneLocation type="chloroplast"/>
<accession>Q9TL34</accession>
<proteinExistence type="inferred from homology"/>
<sequence>MSQAGVKTKQAGKIVQIVGPVMDVAFQPGSMPNIYNALIVKGRNGAGQEVSVVCEVQQLLGDGLVRAVSMSATDGLMRGMEVTDTGRALSVPVGPTTLGRIFNVLGEPVDNMGPVGNEKTLPIHREAPAFVDLDTKLSIFETGIKVVDLLAPYRRGGKIGLFGGAGVGKTVLIMELINNIAKAHGGVSVFGGVGERTREGNDLYMEMCESKVINKADVKSSKVALVYGQMNEPPGARMRVGLTALTMAEYFRDVNNQDVLLFIDNIFRFVQAGSEVSALLGRMPSAVGYQPTLATEMGGLQERITSTKDGSITSIQAVYVPADDLTDPAPATTFAHLDATTVLSRNLAAKGIYPAVDPLDSTSTMLQPWILGDDHYGTAQRVKQTLQRYKELQDIIAILGLDELSEEDRMIVARARKIERFLSQPFFVAEVFTGAPGKYVPLAESIQGFKLILSGELDSLPESAFYLVGNIEEAIAKAASIQAAAAAAAAA</sequence>
<evidence type="ECO:0000255" key="1">
    <source>
        <dbReference type="HAMAP-Rule" id="MF_01347"/>
    </source>
</evidence>
<keyword id="KW-0066">ATP synthesis</keyword>
<keyword id="KW-0067">ATP-binding</keyword>
<keyword id="KW-0139">CF(1)</keyword>
<keyword id="KW-0150">Chloroplast</keyword>
<keyword id="KW-0375">Hydrogen ion transport</keyword>
<keyword id="KW-0406">Ion transport</keyword>
<keyword id="KW-0472">Membrane</keyword>
<keyword id="KW-0547">Nucleotide-binding</keyword>
<keyword id="KW-0934">Plastid</keyword>
<keyword id="KW-0793">Thylakoid</keyword>
<keyword id="KW-1278">Translocase</keyword>
<keyword id="KW-0813">Transport</keyword>
<reference key="1">
    <citation type="journal article" date="1999" name="Proc. Natl. Acad. Sci. U.S.A.">
        <title>The complete chloroplast DNA sequence of the green alga Nephroselmis olivacea: insights into the architecture of ancestral chloroplast genomes.</title>
        <authorList>
            <person name="Turmel M."/>
            <person name="Otis C."/>
            <person name="Lemieux C."/>
        </authorList>
    </citation>
    <scope>NUCLEOTIDE SEQUENCE [LARGE SCALE GENOMIC DNA]</scope>
    <source>
        <strain>NIES-484 / S-N-5-8</strain>
    </source>
</reference>
<gene>
    <name evidence="1" type="primary">atpB</name>
</gene>
<name>ATPB_NEPOL</name>
<dbReference type="EC" id="7.1.2.2" evidence="1"/>
<dbReference type="EMBL" id="AF137379">
    <property type="protein sequence ID" value="AAD54782.1"/>
    <property type="molecule type" value="Genomic_DNA"/>
</dbReference>
<dbReference type="RefSeq" id="NP_050811.1">
    <property type="nucleotide sequence ID" value="NC_000927.1"/>
</dbReference>
<dbReference type="SMR" id="Q9TL34"/>
<dbReference type="GeneID" id="801986"/>
<dbReference type="GO" id="GO:0009535">
    <property type="term" value="C:chloroplast thylakoid membrane"/>
    <property type="evidence" value="ECO:0007669"/>
    <property type="project" value="UniProtKB-SubCell"/>
</dbReference>
<dbReference type="GO" id="GO:0005739">
    <property type="term" value="C:mitochondrion"/>
    <property type="evidence" value="ECO:0007669"/>
    <property type="project" value="GOC"/>
</dbReference>
<dbReference type="GO" id="GO:0045259">
    <property type="term" value="C:proton-transporting ATP synthase complex"/>
    <property type="evidence" value="ECO:0007669"/>
    <property type="project" value="UniProtKB-KW"/>
</dbReference>
<dbReference type="GO" id="GO:0005524">
    <property type="term" value="F:ATP binding"/>
    <property type="evidence" value="ECO:0007669"/>
    <property type="project" value="UniProtKB-UniRule"/>
</dbReference>
<dbReference type="GO" id="GO:0016887">
    <property type="term" value="F:ATP hydrolysis activity"/>
    <property type="evidence" value="ECO:0007669"/>
    <property type="project" value="InterPro"/>
</dbReference>
<dbReference type="GO" id="GO:0046933">
    <property type="term" value="F:proton-transporting ATP synthase activity, rotational mechanism"/>
    <property type="evidence" value="ECO:0007669"/>
    <property type="project" value="UniProtKB-UniRule"/>
</dbReference>
<dbReference type="GO" id="GO:0042776">
    <property type="term" value="P:proton motive force-driven mitochondrial ATP synthesis"/>
    <property type="evidence" value="ECO:0007669"/>
    <property type="project" value="TreeGrafter"/>
</dbReference>
<dbReference type="CDD" id="cd18110">
    <property type="entry name" value="ATP-synt_F1_beta_C"/>
    <property type="match status" value="1"/>
</dbReference>
<dbReference type="CDD" id="cd18115">
    <property type="entry name" value="ATP-synt_F1_beta_N"/>
    <property type="match status" value="1"/>
</dbReference>
<dbReference type="CDD" id="cd01133">
    <property type="entry name" value="F1-ATPase_beta_CD"/>
    <property type="match status" value="1"/>
</dbReference>
<dbReference type="FunFam" id="1.10.1140.10:FF:000001">
    <property type="entry name" value="ATP synthase subunit beta"/>
    <property type="match status" value="1"/>
</dbReference>
<dbReference type="FunFam" id="3.40.50.300:FF:000026">
    <property type="entry name" value="ATP synthase subunit beta"/>
    <property type="match status" value="1"/>
</dbReference>
<dbReference type="FunFam" id="2.40.10.170:FF:000002">
    <property type="entry name" value="ATP synthase subunit beta, chloroplastic"/>
    <property type="match status" value="1"/>
</dbReference>
<dbReference type="Gene3D" id="2.40.10.170">
    <property type="match status" value="1"/>
</dbReference>
<dbReference type="Gene3D" id="1.10.1140.10">
    <property type="entry name" value="Bovine Mitochondrial F1-atpase, Atp Synthase Beta Chain, Chain D, domain 3"/>
    <property type="match status" value="1"/>
</dbReference>
<dbReference type="Gene3D" id="3.40.50.300">
    <property type="entry name" value="P-loop containing nucleotide triphosphate hydrolases"/>
    <property type="match status" value="1"/>
</dbReference>
<dbReference type="HAMAP" id="MF_01347">
    <property type="entry name" value="ATP_synth_beta_bact"/>
    <property type="match status" value="1"/>
</dbReference>
<dbReference type="InterPro" id="IPR003593">
    <property type="entry name" value="AAA+_ATPase"/>
</dbReference>
<dbReference type="InterPro" id="IPR055190">
    <property type="entry name" value="ATP-synt_VA_C"/>
</dbReference>
<dbReference type="InterPro" id="IPR005722">
    <property type="entry name" value="ATP_synth_F1_bsu"/>
</dbReference>
<dbReference type="InterPro" id="IPR020003">
    <property type="entry name" value="ATPase_a/bsu_AS"/>
</dbReference>
<dbReference type="InterPro" id="IPR050053">
    <property type="entry name" value="ATPase_alpha/beta_chains"/>
</dbReference>
<dbReference type="InterPro" id="IPR004100">
    <property type="entry name" value="ATPase_F1/V1/A1_a/bsu_N"/>
</dbReference>
<dbReference type="InterPro" id="IPR036121">
    <property type="entry name" value="ATPase_F1/V1/A1_a/bsu_N_sf"/>
</dbReference>
<dbReference type="InterPro" id="IPR000194">
    <property type="entry name" value="ATPase_F1/V1/A1_a/bsu_nucl-bd"/>
</dbReference>
<dbReference type="InterPro" id="IPR024034">
    <property type="entry name" value="ATPase_F1/V1_b/a_C"/>
</dbReference>
<dbReference type="InterPro" id="IPR027417">
    <property type="entry name" value="P-loop_NTPase"/>
</dbReference>
<dbReference type="NCBIfam" id="TIGR01039">
    <property type="entry name" value="atpD"/>
    <property type="match status" value="1"/>
</dbReference>
<dbReference type="PANTHER" id="PTHR15184">
    <property type="entry name" value="ATP SYNTHASE"/>
    <property type="match status" value="1"/>
</dbReference>
<dbReference type="PANTHER" id="PTHR15184:SF71">
    <property type="entry name" value="ATP SYNTHASE SUBUNIT BETA, MITOCHONDRIAL"/>
    <property type="match status" value="1"/>
</dbReference>
<dbReference type="Pfam" id="PF00006">
    <property type="entry name" value="ATP-synt_ab"/>
    <property type="match status" value="1"/>
</dbReference>
<dbReference type="Pfam" id="PF02874">
    <property type="entry name" value="ATP-synt_ab_N"/>
    <property type="match status" value="1"/>
</dbReference>
<dbReference type="Pfam" id="PF22919">
    <property type="entry name" value="ATP-synt_VA_C"/>
    <property type="match status" value="1"/>
</dbReference>
<dbReference type="SMART" id="SM00382">
    <property type="entry name" value="AAA"/>
    <property type="match status" value="1"/>
</dbReference>
<dbReference type="SUPFAM" id="SSF47917">
    <property type="entry name" value="C-terminal domain of alpha and beta subunits of F1 ATP synthase"/>
    <property type="match status" value="1"/>
</dbReference>
<dbReference type="SUPFAM" id="SSF50615">
    <property type="entry name" value="N-terminal domain of alpha and beta subunits of F1 ATP synthase"/>
    <property type="match status" value="1"/>
</dbReference>
<dbReference type="SUPFAM" id="SSF52540">
    <property type="entry name" value="P-loop containing nucleoside triphosphate hydrolases"/>
    <property type="match status" value="1"/>
</dbReference>
<dbReference type="PROSITE" id="PS00152">
    <property type="entry name" value="ATPASE_ALPHA_BETA"/>
    <property type="match status" value="1"/>
</dbReference>
<feature type="chain" id="PRO_0000144529" description="ATP synthase subunit beta, chloroplastic">
    <location>
        <begin position="1"/>
        <end position="491"/>
    </location>
</feature>
<feature type="binding site" evidence="1">
    <location>
        <begin position="163"/>
        <end position="170"/>
    </location>
    <ligand>
        <name>ATP</name>
        <dbReference type="ChEBI" id="CHEBI:30616"/>
    </ligand>
</feature>
<comment type="function">
    <text evidence="1">Produces ATP from ADP in the presence of a proton gradient across the membrane. The catalytic sites are hosted primarily by the beta subunits.</text>
</comment>
<comment type="catalytic activity">
    <reaction evidence="1">
        <text>ATP + H2O + 4 H(+)(in) = ADP + phosphate + 5 H(+)(out)</text>
        <dbReference type="Rhea" id="RHEA:57720"/>
        <dbReference type="ChEBI" id="CHEBI:15377"/>
        <dbReference type="ChEBI" id="CHEBI:15378"/>
        <dbReference type="ChEBI" id="CHEBI:30616"/>
        <dbReference type="ChEBI" id="CHEBI:43474"/>
        <dbReference type="ChEBI" id="CHEBI:456216"/>
        <dbReference type="EC" id="7.1.2.2"/>
    </reaction>
</comment>
<comment type="subunit">
    <text evidence="1">F-type ATPases have 2 components, CF(1) - the catalytic core - and CF(0) - the membrane proton channel. CF(1) has five subunits: alpha(3), beta(3), gamma(1), delta(1), epsilon(1). CF(0) has four main subunits: a(1), b(1), b'(1) and c(9-12).</text>
</comment>
<comment type="subcellular location">
    <subcellularLocation>
        <location evidence="1">Plastid</location>
        <location evidence="1">Chloroplast thylakoid membrane</location>
        <topology evidence="1">Peripheral membrane protein</topology>
    </subcellularLocation>
</comment>
<comment type="similarity">
    <text evidence="1">Belongs to the ATPase alpha/beta chains family.</text>
</comment>
<organism>
    <name type="scientific">Nephroselmis olivacea</name>
    <name type="common">Green alga</name>
    <dbReference type="NCBI Taxonomy" id="31312"/>
    <lineage>
        <taxon>Eukaryota</taxon>
        <taxon>Viridiplantae</taxon>
        <taxon>Chlorophyta</taxon>
        <taxon>Nephroselmidophyceae</taxon>
        <taxon>Nephroselmidales</taxon>
        <taxon>Nephroselmidaceae</taxon>
        <taxon>Nephroselmis</taxon>
    </lineage>
</organism>